<dbReference type="EC" id="1.1.1.38" evidence="1"/>
<dbReference type="EMBL" id="CP000266">
    <property type="protein sequence ID" value="ABF03908.1"/>
    <property type="molecule type" value="Genomic_DNA"/>
</dbReference>
<dbReference type="RefSeq" id="WP_000433464.1">
    <property type="nucleotide sequence ID" value="NC_008258.1"/>
</dbReference>
<dbReference type="SMR" id="Q0T457"/>
<dbReference type="GeneID" id="93775638"/>
<dbReference type="KEGG" id="sfv:SFV_1742"/>
<dbReference type="HOGENOM" id="CLU_011405_5_2_6"/>
<dbReference type="Proteomes" id="UP000000659">
    <property type="component" value="Chromosome"/>
</dbReference>
<dbReference type="GO" id="GO:0005829">
    <property type="term" value="C:cytosol"/>
    <property type="evidence" value="ECO:0007669"/>
    <property type="project" value="TreeGrafter"/>
</dbReference>
<dbReference type="GO" id="GO:0004471">
    <property type="term" value="F:malate dehydrogenase (decarboxylating) (NAD+) activity"/>
    <property type="evidence" value="ECO:0007669"/>
    <property type="project" value="UniProtKB-UniRule"/>
</dbReference>
<dbReference type="GO" id="GO:0046872">
    <property type="term" value="F:metal ion binding"/>
    <property type="evidence" value="ECO:0007669"/>
    <property type="project" value="UniProtKB-KW"/>
</dbReference>
<dbReference type="GO" id="GO:0051287">
    <property type="term" value="F:NAD binding"/>
    <property type="evidence" value="ECO:0007669"/>
    <property type="project" value="InterPro"/>
</dbReference>
<dbReference type="GO" id="GO:0008948">
    <property type="term" value="F:oxaloacetate decarboxylase activity"/>
    <property type="evidence" value="ECO:0007669"/>
    <property type="project" value="UniProtKB-UniRule"/>
</dbReference>
<dbReference type="GO" id="GO:0006108">
    <property type="term" value="P:malate metabolic process"/>
    <property type="evidence" value="ECO:0007669"/>
    <property type="project" value="TreeGrafter"/>
</dbReference>
<dbReference type="CDD" id="cd05312">
    <property type="entry name" value="NAD_bind_1_malic_enz"/>
    <property type="match status" value="1"/>
</dbReference>
<dbReference type="FunFam" id="3.40.50.10380:FF:000001">
    <property type="entry name" value="NAD-dependent malic enzyme"/>
    <property type="match status" value="1"/>
</dbReference>
<dbReference type="FunFam" id="3.40.50.720:FF:000055">
    <property type="entry name" value="NAD-dependent malic enzyme"/>
    <property type="match status" value="1"/>
</dbReference>
<dbReference type="Gene3D" id="3.40.50.10380">
    <property type="entry name" value="Malic enzyme, N-terminal domain"/>
    <property type="match status" value="1"/>
</dbReference>
<dbReference type="Gene3D" id="3.40.50.720">
    <property type="entry name" value="NAD(P)-binding Rossmann-like Domain"/>
    <property type="match status" value="1"/>
</dbReference>
<dbReference type="HAMAP" id="MF_01619">
    <property type="entry name" value="NAD_malic_enz"/>
    <property type="match status" value="1"/>
</dbReference>
<dbReference type="InterPro" id="IPR046346">
    <property type="entry name" value="Aminoacid_DH-like_N_sf"/>
</dbReference>
<dbReference type="InterPro" id="IPR015884">
    <property type="entry name" value="Malic_enzyme_CS"/>
</dbReference>
<dbReference type="InterPro" id="IPR012301">
    <property type="entry name" value="Malic_N_dom"/>
</dbReference>
<dbReference type="InterPro" id="IPR037062">
    <property type="entry name" value="Malic_N_dom_sf"/>
</dbReference>
<dbReference type="InterPro" id="IPR012302">
    <property type="entry name" value="Malic_NAD-bd"/>
</dbReference>
<dbReference type="InterPro" id="IPR001891">
    <property type="entry name" value="Malic_OxRdtase"/>
</dbReference>
<dbReference type="InterPro" id="IPR036291">
    <property type="entry name" value="NAD(P)-bd_dom_sf"/>
</dbReference>
<dbReference type="InterPro" id="IPR023667">
    <property type="entry name" value="NAD_malic_enz_proteobac"/>
</dbReference>
<dbReference type="NCBIfam" id="NF010052">
    <property type="entry name" value="PRK13529.1"/>
    <property type="match status" value="1"/>
</dbReference>
<dbReference type="PANTHER" id="PTHR23406">
    <property type="entry name" value="MALIC ENZYME-RELATED"/>
    <property type="match status" value="1"/>
</dbReference>
<dbReference type="PANTHER" id="PTHR23406:SF34">
    <property type="entry name" value="NAD-DEPENDENT MALIC ENZYME, MITOCHONDRIAL"/>
    <property type="match status" value="1"/>
</dbReference>
<dbReference type="Pfam" id="PF00390">
    <property type="entry name" value="malic"/>
    <property type="match status" value="1"/>
</dbReference>
<dbReference type="Pfam" id="PF03949">
    <property type="entry name" value="Malic_M"/>
    <property type="match status" value="1"/>
</dbReference>
<dbReference type="PIRSF" id="PIRSF000106">
    <property type="entry name" value="ME"/>
    <property type="match status" value="1"/>
</dbReference>
<dbReference type="PRINTS" id="PR00072">
    <property type="entry name" value="MALOXRDTASE"/>
</dbReference>
<dbReference type="SMART" id="SM01274">
    <property type="entry name" value="malic"/>
    <property type="match status" value="1"/>
</dbReference>
<dbReference type="SMART" id="SM00919">
    <property type="entry name" value="Malic_M"/>
    <property type="match status" value="1"/>
</dbReference>
<dbReference type="SUPFAM" id="SSF53223">
    <property type="entry name" value="Aminoacid dehydrogenase-like, N-terminal domain"/>
    <property type="match status" value="1"/>
</dbReference>
<dbReference type="SUPFAM" id="SSF51735">
    <property type="entry name" value="NAD(P)-binding Rossmann-fold domains"/>
    <property type="match status" value="1"/>
</dbReference>
<dbReference type="PROSITE" id="PS00331">
    <property type="entry name" value="MALIC_ENZYMES"/>
    <property type="match status" value="1"/>
</dbReference>
<proteinExistence type="inferred from homology"/>
<reference key="1">
    <citation type="journal article" date="2006" name="BMC Genomics">
        <title>Complete genome sequence of Shigella flexneri 5b and comparison with Shigella flexneri 2a.</title>
        <authorList>
            <person name="Nie H."/>
            <person name="Yang F."/>
            <person name="Zhang X."/>
            <person name="Yang J."/>
            <person name="Chen L."/>
            <person name="Wang J."/>
            <person name="Xiong Z."/>
            <person name="Peng J."/>
            <person name="Sun L."/>
            <person name="Dong J."/>
            <person name="Xue Y."/>
            <person name="Xu X."/>
            <person name="Chen S."/>
            <person name="Yao Z."/>
            <person name="Shen Y."/>
            <person name="Jin Q."/>
        </authorList>
    </citation>
    <scope>NUCLEOTIDE SEQUENCE [LARGE SCALE GENOMIC DNA]</scope>
    <source>
        <strain>8401</strain>
    </source>
</reference>
<evidence type="ECO:0000255" key="1">
    <source>
        <dbReference type="HAMAP-Rule" id="MF_01619"/>
    </source>
</evidence>
<name>MAO1_SHIF8</name>
<keyword id="KW-0479">Metal-binding</keyword>
<keyword id="KW-0520">NAD</keyword>
<keyword id="KW-0560">Oxidoreductase</keyword>
<comment type="catalytic activity">
    <reaction evidence="1">
        <text>(S)-malate + NAD(+) = pyruvate + CO2 + NADH</text>
        <dbReference type="Rhea" id="RHEA:12653"/>
        <dbReference type="ChEBI" id="CHEBI:15361"/>
        <dbReference type="ChEBI" id="CHEBI:15589"/>
        <dbReference type="ChEBI" id="CHEBI:16526"/>
        <dbReference type="ChEBI" id="CHEBI:57540"/>
        <dbReference type="ChEBI" id="CHEBI:57945"/>
        <dbReference type="EC" id="1.1.1.38"/>
    </reaction>
</comment>
<comment type="catalytic activity">
    <reaction evidence="1">
        <text>oxaloacetate + H(+) = pyruvate + CO2</text>
        <dbReference type="Rhea" id="RHEA:15641"/>
        <dbReference type="ChEBI" id="CHEBI:15361"/>
        <dbReference type="ChEBI" id="CHEBI:15378"/>
        <dbReference type="ChEBI" id="CHEBI:16452"/>
        <dbReference type="ChEBI" id="CHEBI:16526"/>
        <dbReference type="EC" id="1.1.1.38"/>
    </reaction>
</comment>
<comment type="cofactor">
    <cofactor evidence="1">
        <name>Mg(2+)</name>
        <dbReference type="ChEBI" id="CHEBI:18420"/>
    </cofactor>
    <cofactor evidence="1">
        <name>Mn(2+)</name>
        <dbReference type="ChEBI" id="CHEBI:29035"/>
    </cofactor>
    <text evidence="1">Divalent metal cations. Prefers magnesium or manganese.</text>
</comment>
<comment type="subunit">
    <text evidence="1">Homotetramer.</text>
</comment>
<comment type="similarity">
    <text evidence="1">Belongs to the malic enzymes family.</text>
</comment>
<protein>
    <recommendedName>
        <fullName evidence="1">NAD-dependent malic enzyme</fullName>
        <shortName evidence="1">NAD-ME</shortName>
        <ecNumber evidence="1">1.1.1.38</ecNumber>
    </recommendedName>
</protein>
<organism>
    <name type="scientific">Shigella flexneri serotype 5b (strain 8401)</name>
    <dbReference type="NCBI Taxonomy" id="373384"/>
    <lineage>
        <taxon>Bacteria</taxon>
        <taxon>Pseudomonadati</taxon>
        <taxon>Pseudomonadota</taxon>
        <taxon>Gammaproteobacteria</taxon>
        <taxon>Enterobacterales</taxon>
        <taxon>Enterobacteriaceae</taxon>
        <taxon>Shigella</taxon>
    </lineage>
</organism>
<accession>Q0T457</accession>
<gene>
    <name evidence="1" type="primary">maeA</name>
    <name type="ordered locus">SFV_1742</name>
</gene>
<sequence length="565" mass="63163">MEPKTKKQRSLYIPYAGPVLLEFPLLNKGSAFSMEERRNFNLLGLLPEVVETIEEQAERAWIQYQGFKTEIDKHIYLRNIQDTNETLFYRLVNNHLDEMMPVIYTPTVGAACERFSEIYRRSRGVFISYQNRHNMDDILQNVPNHNIKVIVVTDGERILGLGDQGIGGMGIPIGKLSLYTACGGISPAYTLPVVLDVGTNNQQLLNDPLYMGWRNPRITDDEYYEFVDEFIQAVKQRWPDVLLQFEDFAQKNAMPLLNRYRNEICSFNDDIQGTAAVTVGTLIAASRAAGGQLSEKKIVFLGAGSAGCGIAEMIIAQTQREGLSEEAARQKVFMVDRFGLLTDKMPNLLPFQTKLVQKRENLSDWDTDSDVLSLLDVVRNVKPDILIGVSGQTGLFTEEIIREMHKHCPRPIVMPLSNPTSRVEATPQDIIAWTEGNALVATGSPFNPVVWKDKIYPIAQCNNAFIFPGIGLGVIASGASRITDEMLMSASETLAQYSPLVLNGEGLVLPELKDIQKVSRAIAFAVGKMAQQQGVAVKTSAEALQQAIDDNFWQAEYRDYRRTSI</sequence>
<feature type="chain" id="PRO_1000069549" description="NAD-dependent malic enzyme">
    <location>
        <begin position="1"/>
        <end position="565"/>
    </location>
</feature>
<feature type="active site" description="Proton donor" evidence="1">
    <location>
        <position position="104"/>
    </location>
</feature>
<feature type="active site" description="Proton acceptor" evidence="1">
    <location>
        <position position="175"/>
    </location>
</feature>
<feature type="binding site" evidence="1">
    <location>
        <position position="157"/>
    </location>
    <ligand>
        <name>NAD(+)</name>
        <dbReference type="ChEBI" id="CHEBI:57540"/>
    </ligand>
</feature>
<feature type="binding site" evidence="1">
    <location>
        <position position="246"/>
    </location>
    <ligand>
        <name>a divalent metal cation</name>
        <dbReference type="ChEBI" id="CHEBI:60240"/>
    </ligand>
</feature>
<feature type="binding site" evidence="1">
    <location>
        <position position="247"/>
    </location>
    <ligand>
        <name>a divalent metal cation</name>
        <dbReference type="ChEBI" id="CHEBI:60240"/>
    </ligand>
</feature>
<feature type="binding site" evidence="1">
    <location>
        <position position="270"/>
    </location>
    <ligand>
        <name>a divalent metal cation</name>
        <dbReference type="ChEBI" id="CHEBI:60240"/>
    </ligand>
</feature>
<feature type="binding site" evidence="1">
    <location>
        <position position="270"/>
    </location>
    <ligand>
        <name>NAD(+)</name>
        <dbReference type="ChEBI" id="CHEBI:57540"/>
    </ligand>
</feature>
<feature type="binding site" evidence="1">
    <location>
        <position position="418"/>
    </location>
    <ligand>
        <name>NAD(+)</name>
        <dbReference type="ChEBI" id="CHEBI:57540"/>
    </ligand>
</feature>
<feature type="site" description="Important for activity" evidence="1">
    <location>
        <position position="270"/>
    </location>
</feature>